<name>RS15_RHILW</name>
<keyword id="KW-1185">Reference proteome</keyword>
<keyword id="KW-0687">Ribonucleoprotein</keyword>
<keyword id="KW-0689">Ribosomal protein</keyword>
<keyword id="KW-0694">RNA-binding</keyword>
<keyword id="KW-0699">rRNA-binding</keyword>
<dbReference type="EMBL" id="CP001191">
    <property type="protein sequence ID" value="ACI57325.1"/>
    <property type="molecule type" value="Genomic_DNA"/>
</dbReference>
<dbReference type="RefSeq" id="WP_003571238.1">
    <property type="nucleotide sequence ID" value="NC_011369.1"/>
</dbReference>
<dbReference type="SMR" id="B5ZW25"/>
<dbReference type="STRING" id="395492.Rleg2_4063"/>
<dbReference type="KEGG" id="rlt:Rleg2_4063"/>
<dbReference type="eggNOG" id="COG0184">
    <property type="taxonomic scope" value="Bacteria"/>
</dbReference>
<dbReference type="HOGENOM" id="CLU_148518_0_0_5"/>
<dbReference type="Proteomes" id="UP000008330">
    <property type="component" value="Chromosome"/>
</dbReference>
<dbReference type="GO" id="GO:0022627">
    <property type="term" value="C:cytosolic small ribosomal subunit"/>
    <property type="evidence" value="ECO:0007669"/>
    <property type="project" value="TreeGrafter"/>
</dbReference>
<dbReference type="GO" id="GO:0019843">
    <property type="term" value="F:rRNA binding"/>
    <property type="evidence" value="ECO:0007669"/>
    <property type="project" value="UniProtKB-UniRule"/>
</dbReference>
<dbReference type="GO" id="GO:0003735">
    <property type="term" value="F:structural constituent of ribosome"/>
    <property type="evidence" value="ECO:0007669"/>
    <property type="project" value="InterPro"/>
</dbReference>
<dbReference type="GO" id="GO:0006412">
    <property type="term" value="P:translation"/>
    <property type="evidence" value="ECO:0007669"/>
    <property type="project" value="UniProtKB-UniRule"/>
</dbReference>
<dbReference type="CDD" id="cd00353">
    <property type="entry name" value="Ribosomal_S15p_S13e"/>
    <property type="match status" value="1"/>
</dbReference>
<dbReference type="FunFam" id="1.10.287.10:FF:000002">
    <property type="entry name" value="30S ribosomal protein S15"/>
    <property type="match status" value="1"/>
</dbReference>
<dbReference type="Gene3D" id="6.10.250.3130">
    <property type="match status" value="1"/>
</dbReference>
<dbReference type="Gene3D" id="1.10.287.10">
    <property type="entry name" value="S15/NS1, RNA-binding"/>
    <property type="match status" value="1"/>
</dbReference>
<dbReference type="HAMAP" id="MF_01343_B">
    <property type="entry name" value="Ribosomal_uS15_B"/>
    <property type="match status" value="1"/>
</dbReference>
<dbReference type="InterPro" id="IPR000589">
    <property type="entry name" value="Ribosomal_uS15"/>
</dbReference>
<dbReference type="InterPro" id="IPR005290">
    <property type="entry name" value="Ribosomal_uS15_bac-type"/>
</dbReference>
<dbReference type="InterPro" id="IPR009068">
    <property type="entry name" value="uS15_NS1_RNA-bd_sf"/>
</dbReference>
<dbReference type="NCBIfam" id="TIGR00952">
    <property type="entry name" value="S15_bact"/>
    <property type="match status" value="1"/>
</dbReference>
<dbReference type="PANTHER" id="PTHR23321">
    <property type="entry name" value="RIBOSOMAL PROTEIN S15, BACTERIAL AND ORGANELLAR"/>
    <property type="match status" value="1"/>
</dbReference>
<dbReference type="PANTHER" id="PTHR23321:SF26">
    <property type="entry name" value="SMALL RIBOSOMAL SUBUNIT PROTEIN US15M"/>
    <property type="match status" value="1"/>
</dbReference>
<dbReference type="Pfam" id="PF00312">
    <property type="entry name" value="Ribosomal_S15"/>
    <property type="match status" value="1"/>
</dbReference>
<dbReference type="SMART" id="SM01387">
    <property type="entry name" value="Ribosomal_S15"/>
    <property type="match status" value="1"/>
</dbReference>
<dbReference type="SUPFAM" id="SSF47060">
    <property type="entry name" value="S15/NS1 RNA-binding domain"/>
    <property type="match status" value="1"/>
</dbReference>
<dbReference type="PROSITE" id="PS00362">
    <property type="entry name" value="RIBOSOMAL_S15"/>
    <property type="match status" value="1"/>
</dbReference>
<reference key="1">
    <citation type="journal article" date="2010" name="Stand. Genomic Sci.">
        <title>Complete genome sequence of Rhizobium leguminosarum bv trifolii strain WSM2304, an effective microsymbiont of the South American clover Trifolium polymorphum.</title>
        <authorList>
            <person name="Reeve W."/>
            <person name="O'Hara G."/>
            <person name="Chain P."/>
            <person name="Ardley J."/>
            <person name="Brau L."/>
            <person name="Nandesena K."/>
            <person name="Tiwari R."/>
            <person name="Malfatti S."/>
            <person name="Kiss H."/>
            <person name="Lapidus A."/>
            <person name="Copeland A."/>
            <person name="Nolan M."/>
            <person name="Land M."/>
            <person name="Ivanova N."/>
            <person name="Mavromatis K."/>
            <person name="Markowitz V."/>
            <person name="Kyrpides N."/>
            <person name="Melino V."/>
            <person name="Denton M."/>
            <person name="Yates R."/>
            <person name="Howieson J."/>
        </authorList>
    </citation>
    <scope>NUCLEOTIDE SEQUENCE [LARGE SCALE GENOMIC DNA]</scope>
    <source>
        <strain>WSM2304</strain>
    </source>
</reference>
<accession>B5ZW25</accession>
<comment type="function">
    <text evidence="1">One of the primary rRNA binding proteins, it binds directly to 16S rRNA where it helps nucleate assembly of the platform of the 30S subunit by binding and bridging several RNA helices of the 16S rRNA.</text>
</comment>
<comment type="function">
    <text evidence="1">Forms an intersubunit bridge (bridge B4) with the 23S rRNA of the 50S subunit in the ribosome.</text>
</comment>
<comment type="subunit">
    <text evidence="1">Part of the 30S ribosomal subunit. Forms a bridge to the 50S subunit in the 70S ribosome, contacting the 23S rRNA.</text>
</comment>
<comment type="similarity">
    <text evidence="1">Belongs to the universal ribosomal protein uS15 family.</text>
</comment>
<gene>
    <name evidence="1" type="primary">rpsO</name>
    <name type="ordered locus">Rleg2_4063</name>
</gene>
<protein>
    <recommendedName>
        <fullName evidence="1">Small ribosomal subunit protein uS15</fullName>
    </recommendedName>
    <alternativeName>
        <fullName evidence="2">30S ribosomal protein S15</fullName>
    </alternativeName>
</protein>
<proteinExistence type="inferred from homology"/>
<feature type="chain" id="PRO_1000143159" description="Small ribosomal subunit protein uS15">
    <location>
        <begin position="1"/>
        <end position="89"/>
    </location>
</feature>
<sequence length="89" mass="10189">MSITAERKSALIKEYATVEGDTGSPEVQVAILTERINNLTEHFKDHKKDNHSRRGLLTMVSSRRSLLDYLKKKDEGRYSKLISSLGIRR</sequence>
<organism>
    <name type="scientific">Rhizobium leguminosarum bv. trifolii (strain WSM2304)</name>
    <dbReference type="NCBI Taxonomy" id="395492"/>
    <lineage>
        <taxon>Bacteria</taxon>
        <taxon>Pseudomonadati</taxon>
        <taxon>Pseudomonadota</taxon>
        <taxon>Alphaproteobacteria</taxon>
        <taxon>Hyphomicrobiales</taxon>
        <taxon>Rhizobiaceae</taxon>
        <taxon>Rhizobium/Agrobacterium group</taxon>
        <taxon>Rhizobium</taxon>
    </lineage>
</organism>
<evidence type="ECO:0000255" key="1">
    <source>
        <dbReference type="HAMAP-Rule" id="MF_01343"/>
    </source>
</evidence>
<evidence type="ECO:0000305" key="2"/>